<sequence length="109" mass="12563">MAASELLKSRVENLRDYELVVILTTDTPKEKVEAILEGISKTIAEKEGSFTEVNHWGKRKLAYLIGRYVEGYYVFIKMKAKPSSIRKISTDLRISEQVIRHMAINMDEE</sequence>
<proteinExistence type="inferred from homology"/>
<keyword id="KW-0687">Ribonucleoprotein</keyword>
<keyword id="KW-0689">Ribosomal protein</keyword>
<keyword id="KW-0694">RNA-binding</keyword>
<keyword id="KW-0699">rRNA-binding</keyword>
<feature type="chain" id="PRO_0000229538" description="Small ribosomal subunit protein bS6">
    <location>
        <begin position="1"/>
        <end position="109"/>
    </location>
</feature>
<protein>
    <recommendedName>
        <fullName evidence="1">Small ribosomal subunit protein bS6</fullName>
    </recommendedName>
    <alternativeName>
        <fullName evidence="2">30S ribosomal protein S6</fullName>
    </alternativeName>
</protein>
<name>RS6_DEHMC</name>
<reference key="1">
    <citation type="journal article" date="2005" name="Nat. Biotechnol.">
        <title>Genome sequence of the chlorinated compound-respiring bacterium Dehalococcoides species strain CBDB1.</title>
        <authorList>
            <person name="Kube M."/>
            <person name="Beck A."/>
            <person name="Zinder S.H."/>
            <person name="Kuhl H."/>
            <person name="Reinhardt R."/>
            <person name="Adrian L."/>
        </authorList>
    </citation>
    <scope>NUCLEOTIDE SEQUENCE [LARGE SCALE GENOMIC DNA]</scope>
    <source>
        <strain>CBDB1</strain>
    </source>
</reference>
<dbReference type="EMBL" id="AJ965256">
    <property type="protein sequence ID" value="CAI83131.1"/>
    <property type="molecule type" value="Genomic_DNA"/>
</dbReference>
<dbReference type="RefSeq" id="WP_011309482.1">
    <property type="nucleotide sequence ID" value="NC_007356.1"/>
</dbReference>
<dbReference type="SMR" id="Q3ZY12"/>
<dbReference type="KEGG" id="deh:cbdbA1020"/>
<dbReference type="HOGENOM" id="CLU_113441_5_1_0"/>
<dbReference type="Proteomes" id="UP000000433">
    <property type="component" value="Chromosome"/>
</dbReference>
<dbReference type="GO" id="GO:0005737">
    <property type="term" value="C:cytoplasm"/>
    <property type="evidence" value="ECO:0007669"/>
    <property type="project" value="UniProtKB-ARBA"/>
</dbReference>
<dbReference type="GO" id="GO:1990904">
    <property type="term" value="C:ribonucleoprotein complex"/>
    <property type="evidence" value="ECO:0007669"/>
    <property type="project" value="UniProtKB-KW"/>
</dbReference>
<dbReference type="GO" id="GO:0005840">
    <property type="term" value="C:ribosome"/>
    <property type="evidence" value="ECO:0007669"/>
    <property type="project" value="UniProtKB-KW"/>
</dbReference>
<dbReference type="GO" id="GO:0070181">
    <property type="term" value="F:small ribosomal subunit rRNA binding"/>
    <property type="evidence" value="ECO:0007669"/>
    <property type="project" value="TreeGrafter"/>
</dbReference>
<dbReference type="GO" id="GO:0003735">
    <property type="term" value="F:structural constituent of ribosome"/>
    <property type="evidence" value="ECO:0007669"/>
    <property type="project" value="InterPro"/>
</dbReference>
<dbReference type="GO" id="GO:0006412">
    <property type="term" value="P:translation"/>
    <property type="evidence" value="ECO:0007669"/>
    <property type="project" value="UniProtKB-UniRule"/>
</dbReference>
<dbReference type="CDD" id="cd00473">
    <property type="entry name" value="bS6"/>
    <property type="match status" value="1"/>
</dbReference>
<dbReference type="Gene3D" id="3.30.70.60">
    <property type="match status" value="1"/>
</dbReference>
<dbReference type="HAMAP" id="MF_00360">
    <property type="entry name" value="Ribosomal_bS6"/>
    <property type="match status" value="1"/>
</dbReference>
<dbReference type="InterPro" id="IPR000529">
    <property type="entry name" value="Ribosomal_bS6"/>
</dbReference>
<dbReference type="InterPro" id="IPR035980">
    <property type="entry name" value="Ribosomal_bS6_sf"/>
</dbReference>
<dbReference type="InterPro" id="IPR020814">
    <property type="entry name" value="Ribosomal_S6_plastid/chlpt"/>
</dbReference>
<dbReference type="InterPro" id="IPR014717">
    <property type="entry name" value="Transl_elong_EF1B/ribsomal_bS6"/>
</dbReference>
<dbReference type="NCBIfam" id="TIGR00166">
    <property type="entry name" value="S6"/>
    <property type="match status" value="1"/>
</dbReference>
<dbReference type="PANTHER" id="PTHR21011">
    <property type="entry name" value="MITOCHONDRIAL 28S RIBOSOMAL PROTEIN S6"/>
    <property type="match status" value="1"/>
</dbReference>
<dbReference type="PANTHER" id="PTHR21011:SF1">
    <property type="entry name" value="SMALL RIBOSOMAL SUBUNIT PROTEIN BS6M"/>
    <property type="match status" value="1"/>
</dbReference>
<dbReference type="Pfam" id="PF01250">
    <property type="entry name" value="Ribosomal_S6"/>
    <property type="match status" value="1"/>
</dbReference>
<dbReference type="SUPFAM" id="SSF54995">
    <property type="entry name" value="Ribosomal protein S6"/>
    <property type="match status" value="1"/>
</dbReference>
<evidence type="ECO:0000255" key="1">
    <source>
        <dbReference type="HAMAP-Rule" id="MF_00360"/>
    </source>
</evidence>
<evidence type="ECO:0000305" key="2"/>
<organism>
    <name type="scientific">Dehalococcoides mccartyi (strain CBDB1)</name>
    <dbReference type="NCBI Taxonomy" id="255470"/>
    <lineage>
        <taxon>Bacteria</taxon>
        <taxon>Bacillati</taxon>
        <taxon>Chloroflexota</taxon>
        <taxon>Dehalococcoidia</taxon>
        <taxon>Dehalococcoidales</taxon>
        <taxon>Dehalococcoidaceae</taxon>
        <taxon>Dehalococcoides</taxon>
    </lineage>
</organism>
<accession>Q3ZY12</accession>
<comment type="function">
    <text evidence="1">Binds together with bS18 to 16S ribosomal RNA.</text>
</comment>
<comment type="similarity">
    <text evidence="1">Belongs to the bacterial ribosomal protein bS6 family.</text>
</comment>
<gene>
    <name evidence="1" type="primary">rpsF</name>
    <name type="ordered locus">cbdbA1020</name>
</gene>